<proteinExistence type="inferred from homology"/>
<sequence>MSKVLTSLPAGERVGIAFSGGLDTSVAVAWMREKGAVPCTYTADIGQYDEPDIDSVPGRAGAYGAELARLVDCRAALVEEGLAALTTGAFHIRSAGRSYFNTTPLGRAVTGTLLVRAMLEDDVQIWGDGSTYKGNDIERFYRYGLLANPSLRIYKPWLDAGFVAELGGRKEMSEWLQARDLPYRASTEKAYSTDANIWGATHEAKRLEHLDVGVELVEPIMGVRFWDPEVEIAPEDVSIGFEQGRPVSINGATFESAVDLVLEANAIGGRHGLGMSDQIENRIIEAKSRGIYEAPGMALLHAAYERLVNAIHNEDTVASYHNEGRRLGRLMYEGRWLDPQALMLRESLQRWVGNAVTGTVTLRLRRGEDYSILDTQGPAFSYHPDKLSMERTEDSAFGPVDRIGQLTMRNLDIADSRAKLEQYAGMGMVGSSQVSLIGALESGGAEAIASRGESSGDELLDRAAMESGTD</sequence>
<protein>
    <recommendedName>
        <fullName evidence="1">Argininosuccinate synthase</fullName>
        <ecNumber evidence="1">6.3.4.5</ecNumber>
    </recommendedName>
    <alternativeName>
        <fullName evidence="1">Citrulline--aspartate ligase</fullName>
    </alternativeName>
</protein>
<keyword id="KW-0028">Amino-acid biosynthesis</keyword>
<keyword id="KW-0055">Arginine biosynthesis</keyword>
<keyword id="KW-0067">ATP-binding</keyword>
<keyword id="KW-0963">Cytoplasm</keyword>
<keyword id="KW-0436">Ligase</keyword>
<keyword id="KW-0547">Nucleotide-binding</keyword>
<keyword id="KW-1185">Reference proteome</keyword>
<accession>A6W614</accession>
<gene>
    <name evidence="1" type="primary">argG</name>
    <name type="ordered locus">Krad_0765</name>
</gene>
<organism>
    <name type="scientific">Kineococcus radiotolerans (strain ATCC BAA-149 / DSM 14245 / SRS30216)</name>
    <dbReference type="NCBI Taxonomy" id="266940"/>
    <lineage>
        <taxon>Bacteria</taxon>
        <taxon>Bacillati</taxon>
        <taxon>Actinomycetota</taxon>
        <taxon>Actinomycetes</taxon>
        <taxon>Kineosporiales</taxon>
        <taxon>Kineosporiaceae</taxon>
        <taxon>Kineococcus</taxon>
    </lineage>
</organism>
<name>ASSY_KINRD</name>
<comment type="catalytic activity">
    <reaction evidence="1">
        <text>L-citrulline + L-aspartate + ATP = 2-(N(omega)-L-arginino)succinate + AMP + diphosphate + H(+)</text>
        <dbReference type="Rhea" id="RHEA:10932"/>
        <dbReference type="ChEBI" id="CHEBI:15378"/>
        <dbReference type="ChEBI" id="CHEBI:29991"/>
        <dbReference type="ChEBI" id="CHEBI:30616"/>
        <dbReference type="ChEBI" id="CHEBI:33019"/>
        <dbReference type="ChEBI" id="CHEBI:57472"/>
        <dbReference type="ChEBI" id="CHEBI:57743"/>
        <dbReference type="ChEBI" id="CHEBI:456215"/>
        <dbReference type="EC" id="6.3.4.5"/>
    </reaction>
</comment>
<comment type="pathway">
    <text evidence="1">Amino-acid biosynthesis; L-arginine biosynthesis; L-arginine from L-ornithine and carbamoyl phosphate: step 2/3.</text>
</comment>
<comment type="subunit">
    <text evidence="1">Homotetramer.</text>
</comment>
<comment type="subcellular location">
    <subcellularLocation>
        <location evidence="1">Cytoplasm</location>
    </subcellularLocation>
</comment>
<comment type="similarity">
    <text evidence="1">Belongs to the argininosuccinate synthase family. Type 2 subfamily.</text>
</comment>
<dbReference type="EC" id="6.3.4.5" evidence="1"/>
<dbReference type="EMBL" id="CP000750">
    <property type="protein sequence ID" value="ABS02253.1"/>
    <property type="molecule type" value="Genomic_DNA"/>
</dbReference>
<dbReference type="RefSeq" id="WP_012084899.1">
    <property type="nucleotide sequence ID" value="NC_009664.2"/>
</dbReference>
<dbReference type="SMR" id="A6W614"/>
<dbReference type="STRING" id="266940.Krad_0765"/>
<dbReference type="KEGG" id="kra:Krad_0765"/>
<dbReference type="eggNOG" id="COG0137">
    <property type="taxonomic scope" value="Bacteria"/>
</dbReference>
<dbReference type="HOGENOM" id="CLU_032784_4_1_11"/>
<dbReference type="OrthoDB" id="9801641at2"/>
<dbReference type="UniPathway" id="UPA00068">
    <property type="reaction ID" value="UER00113"/>
</dbReference>
<dbReference type="Proteomes" id="UP000001116">
    <property type="component" value="Chromosome"/>
</dbReference>
<dbReference type="GO" id="GO:0005737">
    <property type="term" value="C:cytoplasm"/>
    <property type="evidence" value="ECO:0007669"/>
    <property type="project" value="UniProtKB-SubCell"/>
</dbReference>
<dbReference type="GO" id="GO:0004055">
    <property type="term" value="F:argininosuccinate synthase activity"/>
    <property type="evidence" value="ECO:0007669"/>
    <property type="project" value="UniProtKB-UniRule"/>
</dbReference>
<dbReference type="GO" id="GO:0005524">
    <property type="term" value="F:ATP binding"/>
    <property type="evidence" value="ECO:0007669"/>
    <property type="project" value="UniProtKB-UniRule"/>
</dbReference>
<dbReference type="GO" id="GO:0042803">
    <property type="term" value="F:protein homodimerization activity"/>
    <property type="evidence" value="ECO:0007669"/>
    <property type="project" value="InterPro"/>
</dbReference>
<dbReference type="GO" id="GO:0000053">
    <property type="term" value="P:argininosuccinate metabolic process"/>
    <property type="evidence" value="ECO:0007669"/>
    <property type="project" value="TreeGrafter"/>
</dbReference>
<dbReference type="GO" id="GO:0006526">
    <property type="term" value="P:L-arginine biosynthetic process"/>
    <property type="evidence" value="ECO:0007669"/>
    <property type="project" value="UniProtKB-UniRule"/>
</dbReference>
<dbReference type="GO" id="GO:0000050">
    <property type="term" value="P:urea cycle"/>
    <property type="evidence" value="ECO:0007669"/>
    <property type="project" value="TreeGrafter"/>
</dbReference>
<dbReference type="CDD" id="cd01999">
    <property type="entry name" value="ASS"/>
    <property type="match status" value="1"/>
</dbReference>
<dbReference type="Gene3D" id="1.10.287.400">
    <property type="match status" value="1"/>
</dbReference>
<dbReference type="Gene3D" id="3.90.1260.10">
    <property type="entry name" value="Argininosuccinate synthetase, chain A, domain 2"/>
    <property type="match status" value="1"/>
</dbReference>
<dbReference type="Gene3D" id="3.40.50.620">
    <property type="entry name" value="HUPs"/>
    <property type="match status" value="1"/>
</dbReference>
<dbReference type="HAMAP" id="MF_00581">
    <property type="entry name" value="Arg_succ_synth_type2"/>
    <property type="match status" value="1"/>
</dbReference>
<dbReference type="InterPro" id="IPR023437">
    <property type="entry name" value="Arg_succ_synth_type2_subfam"/>
</dbReference>
<dbReference type="InterPro" id="IPR048268">
    <property type="entry name" value="Arginosuc_syn_C"/>
</dbReference>
<dbReference type="InterPro" id="IPR048267">
    <property type="entry name" value="Arginosuc_syn_N"/>
</dbReference>
<dbReference type="InterPro" id="IPR001518">
    <property type="entry name" value="Arginosuc_synth"/>
</dbReference>
<dbReference type="InterPro" id="IPR018223">
    <property type="entry name" value="Arginosuc_synth_CS"/>
</dbReference>
<dbReference type="InterPro" id="IPR023434">
    <property type="entry name" value="Arginosuc_synth_type_1_subfam"/>
</dbReference>
<dbReference type="InterPro" id="IPR024074">
    <property type="entry name" value="AS_cat/multimer_dom_body"/>
</dbReference>
<dbReference type="InterPro" id="IPR024073">
    <property type="entry name" value="AS_multimer_C_tail"/>
</dbReference>
<dbReference type="InterPro" id="IPR014729">
    <property type="entry name" value="Rossmann-like_a/b/a_fold"/>
</dbReference>
<dbReference type="NCBIfam" id="TIGR00032">
    <property type="entry name" value="argG"/>
    <property type="match status" value="1"/>
</dbReference>
<dbReference type="NCBIfam" id="NF003779">
    <property type="entry name" value="PRK05370.1"/>
    <property type="match status" value="1"/>
</dbReference>
<dbReference type="PANTHER" id="PTHR11587">
    <property type="entry name" value="ARGININOSUCCINATE SYNTHASE"/>
    <property type="match status" value="1"/>
</dbReference>
<dbReference type="PANTHER" id="PTHR11587:SF2">
    <property type="entry name" value="ARGININOSUCCINATE SYNTHASE"/>
    <property type="match status" value="1"/>
</dbReference>
<dbReference type="Pfam" id="PF20979">
    <property type="entry name" value="Arginosuc_syn_C"/>
    <property type="match status" value="1"/>
</dbReference>
<dbReference type="Pfam" id="PF00764">
    <property type="entry name" value="Arginosuc_synth"/>
    <property type="match status" value="1"/>
</dbReference>
<dbReference type="SUPFAM" id="SSF52402">
    <property type="entry name" value="Adenine nucleotide alpha hydrolases-like"/>
    <property type="match status" value="1"/>
</dbReference>
<dbReference type="SUPFAM" id="SSF69864">
    <property type="entry name" value="Argininosuccinate synthetase, C-terminal domain"/>
    <property type="match status" value="1"/>
</dbReference>
<dbReference type="PROSITE" id="PS00564">
    <property type="entry name" value="ARGININOSUCCIN_SYN_1"/>
    <property type="match status" value="1"/>
</dbReference>
<dbReference type="PROSITE" id="PS00565">
    <property type="entry name" value="ARGININOSUCCIN_SYN_2"/>
    <property type="match status" value="1"/>
</dbReference>
<feature type="chain" id="PRO_1000082402" description="Argininosuccinate synthase">
    <location>
        <begin position="1"/>
        <end position="470"/>
    </location>
</feature>
<feature type="region of interest" description="Disordered" evidence="2">
    <location>
        <begin position="448"/>
        <end position="470"/>
    </location>
</feature>
<feature type="binding site" evidence="1">
    <location>
        <begin position="17"/>
        <end position="25"/>
    </location>
    <ligand>
        <name>ATP</name>
        <dbReference type="ChEBI" id="CHEBI:30616"/>
    </ligand>
</feature>
<feature type="binding site" evidence="1">
    <location>
        <position position="43"/>
    </location>
    <ligand>
        <name>ATP</name>
        <dbReference type="ChEBI" id="CHEBI:30616"/>
    </ligand>
</feature>
<feature type="binding site" evidence="1">
    <location>
        <position position="99"/>
    </location>
    <ligand>
        <name>L-citrulline</name>
        <dbReference type="ChEBI" id="CHEBI:57743"/>
    </ligand>
</feature>
<feature type="binding site" evidence="1">
    <location>
        <position position="129"/>
    </location>
    <ligand>
        <name>ATP</name>
        <dbReference type="ChEBI" id="CHEBI:30616"/>
    </ligand>
</feature>
<feature type="binding site" evidence="1">
    <location>
        <position position="131"/>
    </location>
    <ligand>
        <name>ATP</name>
        <dbReference type="ChEBI" id="CHEBI:30616"/>
    </ligand>
</feature>
<feature type="binding site" evidence="1">
    <location>
        <position position="131"/>
    </location>
    <ligand>
        <name>L-aspartate</name>
        <dbReference type="ChEBI" id="CHEBI:29991"/>
    </ligand>
</feature>
<feature type="binding site" evidence="1">
    <location>
        <position position="135"/>
    </location>
    <ligand>
        <name>L-aspartate</name>
        <dbReference type="ChEBI" id="CHEBI:29991"/>
    </ligand>
</feature>
<feature type="binding site" evidence="1">
    <location>
        <position position="135"/>
    </location>
    <ligand>
        <name>L-citrulline</name>
        <dbReference type="ChEBI" id="CHEBI:57743"/>
    </ligand>
</feature>
<feature type="binding site" evidence="1">
    <location>
        <position position="136"/>
    </location>
    <ligand>
        <name>ATP</name>
        <dbReference type="ChEBI" id="CHEBI:30616"/>
    </ligand>
</feature>
<feature type="binding site" evidence="1">
    <location>
        <position position="136"/>
    </location>
    <ligand>
        <name>L-aspartate</name>
        <dbReference type="ChEBI" id="CHEBI:29991"/>
    </ligand>
</feature>
<feature type="binding site" evidence="1">
    <location>
        <position position="139"/>
    </location>
    <ligand>
        <name>L-citrulline</name>
        <dbReference type="ChEBI" id="CHEBI:57743"/>
    </ligand>
</feature>
<feature type="binding site" evidence="1">
    <location>
        <position position="192"/>
    </location>
    <ligand>
        <name>L-citrulline</name>
        <dbReference type="ChEBI" id="CHEBI:57743"/>
    </ligand>
</feature>
<feature type="binding site" evidence="1">
    <location>
        <position position="194"/>
    </location>
    <ligand>
        <name>ATP</name>
        <dbReference type="ChEBI" id="CHEBI:30616"/>
    </ligand>
</feature>
<feature type="binding site" evidence="1">
    <location>
        <position position="201"/>
    </location>
    <ligand>
        <name>L-citrulline</name>
        <dbReference type="ChEBI" id="CHEBI:57743"/>
    </ligand>
</feature>
<feature type="binding site" evidence="1">
    <location>
        <position position="203"/>
    </location>
    <ligand>
        <name>L-citrulline</name>
        <dbReference type="ChEBI" id="CHEBI:57743"/>
    </ligand>
</feature>
<feature type="binding site" evidence="1">
    <location>
        <position position="280"/>
    </location>
    <ligand>
        <name>L-citrulline</name>
        <dbReference type="ChEBI" id="CHEBI:57743"/>
    </ligand>
</feature>
<reference key="1">
    <citation type="journal article" date="2008" name="PLoS ONE">
        <title>Survival in nuclear waste, extreme resistance, and potential applications gleaned from the genome sequence of Kineococcus radiotolerans SRS30216.</title>
        <authorList>
            <person name="Bagwell C.E."/>
            <person name="Bhat S."/>
            <person name="Hawkins G.M."/>
            <person name="Smith B.W."/>
            <person name="Biswas T."/>
            <person name="Hoover T.R."/>
            <person name="Saunders E."/>
            <person name="Han C.S."/>
            <person name="Tsodikov O.V."/>
            <person name="Shimkets L.J."/>
        </authorList>
    </citation>
    <scope>NUCLEOTIDE SEQUENCE [LARGE SCALE GENOMIC DNA]</scope>
    <source>
        <strain>ATCC BAA-149 / DSM 14245 / SRS30216</strain>
    </source>
</reference>
<evidence type="ECO:0000255" key="1">
    <source>
        <dbReference type="HAMAP-Rule" id="MF_00581"/>
    </source>
</evidence>
<evidence type="ECO:0000256" key="2">
    <source>
        <dbReference type="SAM" id="MobiDB-lite"/>
    </source>
</evidence>